<sequence length="397" mass="45820">MIFKYIQEPVLGSLFRSRDSLIYLNRSIDQMGWRLPPRTKPYWWLYYIWTLVVIVLVFIFIPYGLIMTGIKEFKNFTTTDLFTYVQVPVNTNASIMKGIIVLFMRRRFSRAQKMMDAMDIRCTKMEEKVQVHRAAALCNRVVVIYHCIYFGYLSMALTGALVIGKTPFCLYNPLVNPDDHFYLATAIESVTMAGIILANLILDVYPIIYVVVLRIHMELLSERIKTLRTDVEKGDDQHYAELVECVKDHKLIVEYGNTLRPMISATMFIQLLSVGLLLGLAAVSMQFYNTVMERVVSGVYTIAILSQTFPFCYVCEQLSSDCESLTNTLFHSKWIGAERRYRTTMLYFIHNVQQSILFTAGGIFPICLNTNIKMAKFAFSVVTIVNEMDLAEKLRRE</sequence>
<accession>Q9VHS4</accession>
<protein>
    <recommendedName>
        <fullName>Odorant receptor 85a</fullName>
    </recommendedName>
</protein>
<keyword id="KW-1003">Cell membrane</keyword>
<keyword id="KW-0325">Glycoprotein</keyword>
<keyword id="KW-0472">Membrane</keyword>
<keyword id="KW-0552">Olfaction</keyword>
<keyword id="KW-0675">Receptor</keyword>
<keyword id="KW-1185">Reference proteome</keyword>
<keyword id="KW-0716">Sensory transduction</keyword>
<keyword id="KW-0807">Transducer</keyword>
<keyword id="KW-0812">Transmembrane</keyword>
<keyword id="KW-1133">Transmembrane helix</keyword>
<name>OR85A_DROME</name>
<gene>
    <name type="primary">Or85a</name>
    <name type="ORF">CG7454</name>
</gene>
<comment type="function">
    <text evidence="4">Odorant receptor which mediates acceptance or avoidance behavior, depending on its substrates. The odorant receptor repertoire encodes a large collection of odor stimuli that vary widely in identity, intensity, and duration. May form a complex with Orco to form odorant-sensing units, providing sensitive and prolonged odorant signaling and calcium permeability.</text>
</comment>
<comment type="subunit">
    <text evidence="1">Interacts with Orco. Complexes exist early in the endomembrane system in olfactory sensory neurons (OSNs), coupling these complexes to the conserved ciliary trafficking pathway (By similarity).</text>
</comment>
<comment type="subcellular location">
    <subcellularLocation>
        <location evidence="1">Cell membrane</location>
        <topology evidence="1">Multi-pass membrane protein</topology>
    </subcellularLocation>
</comment>
<comment type="tissue specificity">
    <text evidence="3">Expressed in olfactory sensory neurons in the antenna.</text>
</comment>
<comment type="miscellaneous">
    <text>The atypical heteromeric and topological design of the odorant receptors appears to be an insect-specific solution for odor recognition, making the OR/Orco complex an attractive target for the development of highly selective insect repellents to disrupt olfactory-mediated host-seeking behaviors of insect disease vectors. Odor-evoked OR currents are independent of known G-protein-coupled second messenger pathways.</text>
</comment>
<comment type="similarity">
    <text evidence="5">Belongs to the insect chemoreceptor superfamily. Heteromeric odorant receptor channel (TC 1.A.69) family. Or2a subfamily.</text>
</comment>
<feature type="chain" id="PRO_0000174274" description="Odorant receptor 85a">
    <location>
        <begin position="1"/>
        <end position="397"/>
    </location>
</feature>
<feature type="topological domain" description="Cytoplasmic" evidence="2">
    <location>
        <begin position="1"/>
        <end position="46"/>
    </location>
</feature>
<feature type="transmembrane region" description="Helical; Name=1" evidence="2">
    <location>
        <begin position="47"/>
        <end position="67"/>
    </location>
</feature>
<feature type="topological domain" description="Extracellular" evidence="2">
    <location>
        <begin position="68"/>
        <end position="83"/>
    </location>
</feature>
<feature type="transmembrane region" description="Helical; Name=2" evidence="2">
    <location>
        <begin position="84"/>
        <end position="104"/>
    </location>
</feature>
<feature type="topological domain" description="Cytoplasmic" evidence="2">
    <location>
        <begin position="105"/>
        <end position="142"/>
    </location>
</feature>
<feature type="transmembrane region" description="Helical; Name=3" evidence="2">
    <location>
        <begin position="143"/>
        <end position="163"/>
    </location>
</feature>
<feature type="topological domain" description="Extracellular" evidence="2">
    <location>
        <begin position="164"/>
        <end position="192"/>
    </location>
</feature>
<feature type="transmembrane region" description="Helical; Name=4" evidence="2">
    <location>
        <begin position="193"/>
        <end position="213"/>
    </location>
</feature>
<feature type="topological domain" description="Cytoplasmic" evidence="2">
    <location>
        <begin position="214"/>
        <end position="262"/>
    </location>
</feature>
<feature type="transmembrane region" description="Helical; Name=5" evidence="2">
    <location>
        <begin position="263"/>
        <end position="283"/>
    </location>
</feature>
<feature type="topological domain" description="Extracellular" evidence="2">
    <location>
        <begin position="284"/>
        <end position="294"/>
    </location>
</feature>
<feature type="transmembrane region" description="Helical; Name=6" evidence="2">
    <location>
        <begin position="295"/>
        <end position="315"/>
    </location>
</feature>
<feature type="topological domain" description="Cytoplasmic" evidence="2">
    <location>
        <begin position="316"/>
        <end position="347"/>
    </location>
</feature>
<feature type="transmembrane region" description="Helical; Name=7" evidence="2">
    <location>
        <begin position="348"/>
        <end position="368"/>
    </location>
</feature>
<feature type="topological domain" description="Extracellular" evidence="2">
    <location>
        <begin position="369"/>
        <end position="397"/>
    </location>
</feature>
<feature type="glycosylation site" description="N-linked (GlcNAc...) asparagine" evidence="2">
    <location>
        <position position="75"/>
    </location>
</feature>
<proteinExistence type="evidence at transcript level"/>
<organism>
    <name type="scientific">Drosophila melanogaster</name>
    <name type="common">Fruit fly</name>
    <dbReference type="NCBI Taxonomy" id="7227"/>
    <lineage>
        <taxon>Eukaryota</taxon>
        <taxon>Metazoa</taxon>
        <taxon>Ecdysozoa</taxon>
        <taxon>Arthropoda</taxon>
        <taxon>Hexapoda</taxon>
        <taxon>Insecta</taxon>
        <taxon>Pterygota</taxon>
        <taxon>Neoptera</taxon>
        <taxon>Endopterygota</taxon>
        <taxon>Diptera</taxon>
        <taxon>Brachycera</taxon>
        <taxon>Muscomorpha</taxon>
        <taxon>Ephydroidea</taxon>
        <taxon>Drosophilidae</taxon>
        <taxon>Drosophila</taxon>
        <taxon>Sophophora</taxon>
    </lineage>
</organism>
<reference key="1">
    <citation type="journal article" date="2000" name="Science">
        <title>The genome sequence of Drosophila melanogaster.</title>
        <authorList>
            <person name="Adams M.D."/>
            <person name="Celniker S.E."/>
            <person name="Holt R.A."/>
            <person name="Evans C.A."/>
            <person name="Gocayne J.D."/>
            <person name="Amanatides P.G."/>
            <person name="Scherer S.E."/>
            <person name="Li P.W."/>
            <person name="Hoskins R.A."/>
            <person name="Galle R.F."/>
            <person name="George R.A."/>
            <person name="Lewis S.E."/>
            <person name="Richards S."/>
            <person name="Ashburner M."/>
            <person name="Henderson S.N."/>
            <person name="Sutton G.G."/>
            <person name="Wortman J.R."/>
            <person name="Yandell M.D."/>
            <person name="Zhang Q."/>
            <person name="Chen L.X."/>
            <person name="Brandon R.C."/>
            <person name="Rogers Y.-H.C."/>
            <person name="Blazej R.G."/>
            <person name="Champe M."/>
            <person name="Pfeiffer B.D."/>
            <person name="Wan K.H."/>
            <person name="Doyle C."/>
            <person name="Baxter E.G."/>
            <person name="Helt G."/>
            <person name="Nelson C.R."/>
            <person name="Miklos G.L.G."/>
            <person name="Abril J.F."/>
            <person name="Agbayani A."/>
            <person name="An H.-J."/>
            <person name="Andrews-Pfannkoch C."/>
            <person name="Baldwin D."/>
            <person name="Ballew R.M."/>
            <person name="Basu A."/>
            <person name="Baxendale J."/>
            <person name="Bayraktaroglu L."/>
            <person name="Beasley E.M."/>
            <person name="Beeson K.Y."/>
            <person name="Benos P.V."/>
            <person name="Berman B.P."/>
            <person name="Bhandari D."/>
            <person name="Bolshakov S."/>
            <person name="Borkova D."/>
            <person name="Botchan M.R."/>
            <person name="Bouck J."/>
            <person name="Brokstein P."/>
            <person name="Brottier P."/>
            <person name="Burtis K.C."/>
            <person name="Busam D.A."/>
            <person name="Butler H."/>
            <person name="Cadieu E."/>
            <person name="Center A."/>
            <person name="Chandra I."/>
            <person name="Cherry J.M."/>
            <person name="Cawley S."/>
            <person name="Dahlke C."/>
            <person name="Davenport L.B."/>
            <person name="Davies P."/>
            <person name="de Pablos B."/>
            <person name="Delcher A."/>
            <person name="Deng Z."/>
            <person name="Mays A.D."/>
            <person name="Dew I."/>
            <person name="Dietz S.M."/>
            <person name="Dodson K."/>
            <person name="Doup L.E."/>
            <person name="Downes M."/>
            <person name="Dugan-Rocha S."/>
            <person name="Dunkov B.C."/>
            <person name="Dunn P."/>
            <person name="Durbin K.J."/>
            <person name="Evangelista C.C."/>
            <person name="Ferraz C."/>
            <person name="Ferriera S."/>
            <person name="Fleischmann W."/>
            <person name="Fosler C."/>
            <person name="Gabrielian A.E."/>
            <person name="Garg N.S."/>
            <person name="Gelbart W.M."/>
            <person name="Glasser K."/>
            <person name="Glodek A."/>
            <person name="Gong F."/>
            <person name="Gorrell J.H."/>
            <person name="Gu Z."/>
            <person name="Guan P."/>
            <person name="Harris M."/>
            <person name="Harris N.L."/>
            <person name="Harvey D.A."/>
            <person name="Heiman T.J."/>
            <person name="Hernandez J.R."/>
            <person name="Houck J."/>
            <person name="Hostin D."/>
            <person name="Houston K.A."/>
            <person name="Howland T.J."/>
            <person name="Wei M.-H."/>
            <person name="Ibegwam C."/>
            <person name="Jalali M."/>
            <person name="Kalush F."/>
            <person name="Karpen G.H."/>
            <person name="Ke Z."/>
            <person name="Kennison J.A."/>
            <person name="Ketchum K.A."/>
            <person name="Kimmel B.E."/>
            <person name="Kodira C.D."/>
            <person name="Kraft C.L."/>
            <person name="Kravitz S."/>
            <person name="Kulp D."/>
            <person name="Lai Z."/>
            <person name="Lasko P."/>
            <person name="Lei Y."/>
            <person name="Levitsky A.A."/>
            <person name="Li J.H."/>
            <person name="Li Z."/>
            <person name="Liang Y."/>
            <person name="Lin X."/>
            <person name="Liu X."/>
            <person name="Mattei B."/>
            <person name="McIntosh T.C."/>
            <person name="McLeod M.P."/>
            <person name="McPherson D."/>
            <person name="Merkulov G."/>
            <person name="Milshina N.V."/>
            <person name="Mobarry C."/>
            <person name="Morris J."/>
            <person name="Moshrefi A."/>
            <person name="Mount S.M."/>
            <person name="Moy M."/>
            <person name="Murphy B."/>
            <person name="Murphy L."/>
            <person name="Muzny D.M."/>
            <person name="Nelson D.L."/>
            <person name="Nelson D.R."/>
            <person name="Nelson K.A."/>
            <person name="Nixon K."/>
            <person name="Nusskern D.R."/>
            <person name="Pacleb J.M."/>
            <person name="Palazzolo M."/>
            <person name="Pittman G.S."/>
            <person name="Pan S."/>
            <person name="Pollard J."/>
            <person name="Puri V."/>
            <person name="Reese M.G."/>
            <person name="Reinert K."/>
            <person name="Remington K."/>
            <person name="Saunders R.D.C."/>
            <person name="Scheeler F."/>
            <person name="Shen H."/>
            <person name="Shue B.C."/>
            <person name="Siden-Kiamos I."/>
            <person name="Simpson M."/>
            <person name="Skupski M.P."/>
            <person name="Smith T.J."/>
            <person name="Spier E."/>
            <person name="Spradling A.C."/>
            <person name="Stapleton M."/>
            <person name="Strong R."/>
            <person name="Sun E."/>
            <person name="Svirskas R."/>
            <person name="Tector C."/>
            <person name="Turner R."/>
            <person name="Venter E."/>
            <person name="Wang A.H."/>
            <person name="Wang X."/>
            <person name="Wang Z.-Y."/>
            <person name="Wassarman D.A."/>
            <person name="Weinstock G.M."/>
            <person name="Weissenbach J."/>
            <person name="Williams S.M."/>
            <person name="Woodage T."/>
            <person name="Worley K.C."/>
            <person name="Wu D."/>
            <person name="Yang S."/>
            <person name="Yao Q.A."/>
            <person name="Ye J."/>
            <person name="Yeh R.-F."/>
            <person name="Zaveri J.S."/>
            <person name="Zhan M."/>
            <person name="Zhang G."/>
            <person name="Zhao Q."/>
            <person name="Zheng L."/>
            <person name="Zheng X.H."/>
            <person name="Zhong F.N."/>
            <person name="Zhong W."/>
            <person name="Zhou X."/>
            <person name="Zhu S.C."/>
            <person name="Zhu X."/>
            <person name="Smith H.O."/>
            <person name="Gibbs R.A."/>
            <person name="Myers E.W."/>
            <person name="Rubin G.M."/>
            <person name="Venter J.C."/>
        </authorList>
    </citation>
    <scope>NUCLEOTIDE SEQUENCE [LARGE SCALE GENOMIC DNA]</scope>
    <source>
        <strain>Berkeley</strain>
    </source>
</reference>
<reference key="2">
    <citation type="journal article" date="2002" name="Genome Biol.">
        <title>Annotation of the Drosophila melanogaster euchromatic genome: a systematic review.</title>
        <authorList>
            <person name="Misra S."/>
            <person name="Crosby M.A."/>
            <person name="Mungall C.J."/>
            <person name="Matthews B.B."/>
            <person name="Campbell K.S."/>
            <person name="Hradecky P."/>
            <person name="Huang Y."/>
            <person name="Kaminker J.S."/>
            <person name="Millburn G.H."/>
            <person name="Prochnik S.E."/>
            <person name="Smith C.D."/>
            <person name="Tupy J.L."/>
            <person name="Whitfield E.J."/>
            <person name="Bayraktaroglu L."/>
            <person name="Berman B.P."/>
            <person name="Bettencourt B.R."/>
            <person name="Celniker S.E."/>
            <person name="de Grey A.D.N.J."/>
            <person name="Drysdale R.A."/>
            <person name="Harris N.L."/>
            <person name="Richter J."/>
            <person name="Russo S."/>
            <person name="Schroeder A.J."/>
            <person name="Shu S.Q."/>
            <person name="Stapleton M."/>
            <person name="Yamada C."/>
            <person name="Ashburner M."/>
            <person name="Gelbart W.M."/>
            <person name="Rubin G.M."/>
            <person name="Lewis S.E."/>
        </authorList>
    </citation>
    <scope>GENOME REANNOTATION</scope>
    <source>
        <strain>Berkeley</strain>
    </source>
</reference>
<reference key="3">
    <citation type="journal article" date="2000" name="Cell">
        <title>An olfactory sensory map in the fly brain.</title>
        <authorList>
            <person name="Vosshall L.B."/>
            <person name="Wong A.M."/>
            <person name="Axel R."/>
        </authorList>
    </citation>
    <scope>TISSUE SPECIFICITY</scope>
</reference>
<reference key="4">
    <citation type="journal article" date="2006" name="Cell">
        <title>Coding of odors by a receptor repertoire.</title>
        <authorList>
            <person name="Hallem E.A."/>
            <person name="Carlson J.R."/>
        </authorList>
    </citation>
    <scope>FUNCTION</scope>
</reference>
<dbReference type="EMBL" id="AE014297">
    <property type="protein sequence ID" value="AAF54225.1"/>
    <property type="molecule type" value="Genomic_DNA"/>
</dbReference>
<dbReference type="RefSeq" id="NP_524277.1">
    <property type="nucleotide sequence ID" value="NM_079553.1"/>
</dbReference>
<dbReference type="SMR" id="Q9VHS4"/>
<dbReference type="BioGRID" id="66172">
    <property type="interactions" value="1"/>
</dbReference>
<dbReference type="DIP" id="DIP-22791N"/>
<dbReference type="FunCoup" id="Q9VHS4">
    <property type="interactions" value="20"/>
</dbReference>
<dbReference type="IntAct" id="Q9VHS4">
    <property type="interactions" value="1"/>
</dbReference>
<dbReference type="STRING" id="7227.FBpp0081326"/>
<dbReference type="GlyCosmos" id="Q9VHS4">
    <property type="glycosylation" value="1 site, No reported glycans"/>
</dbReference>
<dbReference type="GlyGen" id="Q9VHS4">
    <property type="glycosylation" value="1 site"/>
</dbReference>
<dbReference type="PaxDb" id="7227-FBpp0081326"/>
<dbReference type="EnsemblMetazoa" id="FBtr0081836">
    <property type="protein sequence ID" value="FBpp0081326"/>
    <property type="gene ID" value="FBgn0037576"/>
</dbReference>
<dbReference type="GeneID" id="40991"/>
<dbReference type="KEGG" id="dme:Dmel_CG7454"/>
<dbReference type="AGR" id="FB:FBgn0037576"/>
<dbReference type="CTD" id="40991"/>
<dbReference type="FlyBase" id="FBgn0037576">
    <property type="gene designation" value="Or85a"/>
</dbReference>
<dbReference type="VEuPathDB" id="VectorBase:FBgn0037576"/>
<dbReference type="GeneTree" id="ENSGT00540000073151"/>
<dbReference type="HOGENOM" id="CLU_033399_8_0_1"/>
<dbReference type="InParanoid" id="Q9VHS4"/>
<dbReference type="OMA" id="LIVEYGN"/>
<dbReference type="OrthoDB" id="6604226at2759"/>
<dbReference type="PhylomeDB" id="Q9VHS4"/>
<dbReference type="BioGRID-ORCS" id="40991">
    <property type="hits" value="0 hits in 1 CRISPR screen"/>
</dbReference>
<dbReference type="GenomeRNAi" id="40991"/>
<dbReference type="PRO" id="PR:Q9VHS4"/>
<dbReference type="Proteomes" id="UP000000803">
    <property type="component" value="Chromosome 3R"/>
</dbReference>
<dbReference type="Bgee" id="FBgn0037576">
    <property type="expression patterns" value="Expressed in antenna and 2 other cell types or tissues"/>
</dbReference>
<dbReference type="ExpressionAtlas" id="Q9VHS4">
    <property type="expression patterns" value="baseline and differential"/>
</dbReference>
<dbReference type="GO" id="GO:0032590">
    <property type="term" value="C:dendrite membrane"/>
    <property type="evidence" value="ECO:0000250"/>
    <property type="project" value="FlyBase"/>
</dbReference>
<dbReference type="GO" id="GO:0005886">
    <property type="term" value="C:plasma membrane"/>
    <property type="evidence" value="ECO:0007005"/>
    <property type="project" value="FlyBase"/>
</dbReference>
<dbReference type="GO" id="GO:0170020">
    <property type="term" value="F:ionotropic olfactory receptor activity"/>
    <property type="evidence" value="ECO:0007005"/>
    <property type="project" value="FlyBase"/>
</dbReference>
<dbReference type="GO" id="GO:0005549">
    <property type="term" value="F:odorant binding"/>
    <property type="evidence" value="ECO:0000250"/>
    <property type="project" value="FlyBase"/>
</dbReference>
<dbReference type="GO" id="GO:0004984">
    <property type="term" value="F:olfactory receptor activity"/>
    <property type="evidence" value="ECO:0000318"/>
    <property type="project" value="GO_Central"/>
</dbReference>
<dbReference type="GO" id="GO:0050911">
    <property type="term" value="P:detection of chemical stimulus involved in sensory perception of smell"/>
    <property type="evidence" value="ECO:0007005"/>
    <property type="project" value="FlyBase"/>
</dbReference>
<dbReference type="GO" id="GO:0007165">
    <property type="term" value="P:signal transduction"/>
    <property type="evidence" value="ECO:0007669"/>
    <property type="project" value="UniProtKB-KW"/>
</dbReference>
<dbReference type="InterPro" id="IPR004117">
    <property type="entry name" value="7tm6_olfct_rcpt"/>
</dbReference>
<dbReference type="PANTHER" id="PTHR21137">
    <property type="entry name" value="ODORANT RECEPTOR"/>
    <property type="match status" value="1"/>
</dbReference>
<dbReference type="PANTHER" id="PTHR21137:SF35">
    <property type="entry name" value="ODORANT RECEPTOR 19A-RELATED"/>
    <property type="match status" value="1"/>
</dbReference>
<dbReference type="Pfam" id="PF02949">
    <property type="entry name" value="7tm_6"/>
    <property type="match status" value="1"/>
</dbReference>
<evidence type="ECO:0000250" key="1"/>
<evidence type="ECO:0000255" key="2"/>
<evidence type="ECO:0000269" key="3">
    <source>
    </source>
</evidence>
<evidence type="ECO:0000269" key="4">
    <source>
    </source>
</evidence>
<evidence type="ECO:0000305" key="5"/>